<sequence>MSQQKPHINLVVIGHVDHGKSTLVGHLLYRLGFVDEKTIKMLEEEAKKKGKESFKYAWLLDRLKEERERGVTIDLTFVKFETKKYYFTIIDAPGHRDFVKNMITGASQADAAILVVSARRGEFEAGMSAEGQTREHLILAKTMGIDQLIVAVNKMDATEPPYSKQRYEQIVAFLKKFMKSLGYKVDQIPFIPVSAWTGENLIERSPNMPWYNGPTLVEALDTYIQPPKKPVDKPLRIPIQNVYSIPGVGTVPVGRVETGVLKVGDKVVFMPPGVVGEVRSIEMHHQPLQQAEPGDNIGFNVRGISKKDIRRGDVAGHVDKPPTVAEEFTARIFVIWHPSAITVGYTPVIHAHTASIAARITEIQAKLDPRTGQVIEKNPQFLKAGDAAIVKFKPIKPMVIEKYSEFPQLGRFAMRDMGKTIGIGIVVDVKPAKVEIRAKK</sequence>
<organism>
    <name type="scientific">Hyperthermus butylicus (strain DSM 5456 / JCM 9403 / PLM1-5)</name>
    <dbReference type="NCBI Taxonomy" id="415426"/>
    <lineage>
        <taxon>Archaea</taxon>
        <taxon>Thermoproteota</taxon>
        <taxon>Thermoprotei</taxon>
        <taxon>Desulfurococcales</taxon>
        <taxon>Pyrodictiaceae</taxon>
        <taxon>Hyperthermus</taxon>
    </lineage>
</organism>
<accession>A2BN41</accession>
<reference key="1">
    <citation type="journal article" date="2007" name="Archaea">
        <title>The genome of Hyperthermus butylicus: a sulfur-reducing, peptide fermenting, neutrophilic Crenarchaeote growing up to 108 degrees C.</title>
        <authorList>
            <person name="Bruegger K."/>
            <person name="Chen L."/>
            <person name="Stark M."/>
            <person name="Zibat A."/>
            <person name="Redder P."/>
            <person name="Ruepp A."/>
            <person name="Awayez M."/>
            <person name="She Q."/>
            <person name="Garrett R.A."/>
            <person name="Klenk H.-P."/>
        </authorList>
    </citation>
    <scope>NUCLEOTIDE SEQUENCE [LARGE SCALE GENOMIC DNA]</scope>
    <source>
        <strain>DSM 5456 / JCM 9403 / PLM1-5</strain>
    </source>
</reference>
<comment type="function">
    <text evidence="2">GTP hydrolase that promotes the GTP-dependent binding of aminoacyl-tRNA to the A-site of ribosomes during protein biosynthesis.</text>
</comment>
<comment type="catalytic activity">
    <reaction evidence="2">
        <text>GTP + H2O = GDP + phosphate + H(+)</text>
        <dbReference type="Rhea" id="RHEA:19669"/>
        <dbReference type="ChEBI" id="CHEBI:15377"/>
        <dbReference type="ChEBI" id="CHEBI:15378"/>
        <dbReference type="ChEBI" id="CHEBI:37565"/>
        <dbReference type="ChEBI" id="CHEBI:43474"/>
        <dbReference type="ChEBI" id="CHEBI:58189"/>
        <dbReference type="EC" id="3.6.5.3"/>
    </reaction>
    <physiologicalReaction direction="left-to-right" evidence="2">
        <dbReference type="Rhea" id="RHEA:19670"/>
    </physiologicalReaction>
</comment>
<comment type="subcellular location">
    <subcellularLocation>
        <location evidence="2">Cytoplasm</location>
    </subcellularLocation>
</comment>
<comment type="similarity">
    <text evidence="2">Belongs to the TRAFAC class translation factor GTPase superfamily. Classic translation factor GTPase family. EF-Tu/EF-1A subfamily.</text>
</comment>
<keyword id="KW-0963">Cytoplasm</keyword>
<keyword id="KW-0251">Elongation factor</keyword>
<keyword id="KW-0342">GTP-binding</keyword>
<keyword id="KW-0378">Hydrolase</keyword>
<keyword id="KW-0460">Magnesium</keyword>
<keyword id="KW-0479">Metal-binding</keyword>
<keyword id="KW-0547">Nucleotide-binding</keyword>
<keyword id="KW-0648">Protein biosynthesis</keyword>
<keyword id="KW-1185">Reference proteome</keyword>
<name>EF1A_HYPBU</name>
<protein>
    <recommendedName>
        <fullName evidence="2">Elongation factor 1-alpha</fullName>
        <shortName evidence="2">EF-1-alpha</shortName>
        <ecNumber evidence="2">3.6.5.3</ecNumber>
    </recommendedName>
    <alternativeName>
        <fullName evidence="2">Elongation factor Tu</fullName>
        <shortName evidence="2">EF-Tu</shortName>
    </alternativeName>
</protein>
<proteinExistence type="inferred from homology"/>
<evidence type="ECO:0000250" key="1"/>
<evidence type="ECO:0000255" key="2">
    <source>
        <dbReference type="HAMAP-Rule" id="MF_00118"/>
    </source>
</evidence>
<feature type="chain" id="PRO_1000015674" description="Elongation factor 1-alpha">
    <location>
        <begin position="1"/>
        <end position="440"/>
    </location>
</feature>
<feature type="domain" description="tr-type G">
    <location>
        <begin position="5"/>
        <end position="228"/>
    </location>
</feature>
<feature type="region of interest" description="G1" evidence="1">
    <location>
        <begin position="14"/>
        <end position="21"/>
    </location>
</feature>
<feature type="region of interest" description="G2" evidence="1">
    <location>
        <begin position="70"/>
        <end position="74"/>
    </location>
</feature>
<feature type="region of interest" description="G3" evidence="1">
    <location>
        <begin position="91"/>
        <end position="94"/>
    </location>
</feature>
<feature type="region of interest" description="G4" evidence="1">
    <location>
        <begin position="153"/>
        <end position="156"/>
    </location>
</feature>
<feature type="region of interest" description="G5" evidence="1">
    <location>
        <begin position="194"/>
        <end position="196"/>
    </location>
</feature>
<feature type="binding site" evidence="2">
    <location>
        <begin position="14"/>
        <end position="21"/>
    </location>
    <ligand>
        <name>GTP</name>
        <dbReference type="ChEBI" id="CHEBI:37565"/>
    </ligand>
</feature>
<feature type="binding site" evidence="2">
    <location>
        <position position="21"/>
    </location>
    <ligand>
        <name>Mg(2+)</name>
        <dbReference type="ChEBI" id="CHEBI:18420"/>
    </ligand>
</feature>
<feature type="binding site" evidence="2">
    <location>
        <begin position="91"/>
        <end position="95"/>
    </location>
    <ligand>
        <name>GTP</name>
        <dbReference type="ChEBI" id="CHEBI:37565"/>
    </ligand>
</feature>
<feature type="binding site" evidence="2">
    <location>
        <begin position="153"/>
        <end position="156"/>
    </location>
    <ligand>
        <name>GTP</name>
        <dbReference type="ChEBI" id="CHEBI:37565"/>
    </ligand>
</feature>
<dbReference type="EC" id="3.6.5.3" evidence="2"/>
<dbReference type="EMBL" id="CP000493">
    <property type="protein sequence ID" value="ABM81402.1"/>
    <property type="molecule type" value="Genomic_DNA"/>
</dbReference>
<dbReference type="RefSeq" id="WP_011822720.1">
    <property type="nucleotide sequence ID" value="NC_008818.1"/>
</dbReference>
<dbReference type="SMR" id="A2BN41"/>
<dbReference type="STRING" id="415426.Hbut_1581"/>
<dbReference type="EnsemblBacteria" id="ABM81402">
    <property type="protein sequence ID" value="ABM81402"/>
    <property type="gene ID" value="Hbut_1581"/>
</dbReference>
<dbReference type="GeneID" id="4781899"/>
<dbReference type="KEGG" id="hbu:Hbut_1581"/>
<dbReference type="eggNOG" id="arCOG01561">
    <property type="taxonomic scope" value="Archaea"/>
</dbReference>
<dbReference type="HOGENOM" id="CLU_007265_3_5_2"/>
<dbReference type="OrthoDB" id="371718at2157"/>
<dbReference type="Proteomes" id="UP000002593">
    <property type="component" value="Chromosome"/>
</dbReference>
<dbReference type="GO" id="GO:0005737">
    <property type="term" value="C:cytoplasm"/>
    <property type="evidence" value="ECO:0007669"/>
    <property type="project" value="UniProtKB-SubCell"/>
</dbReference>
<dbReference type="GO" id="GO:0005525">
    <property type="term" value="F:GTP binding"/>
    <property type="evidence" value="ECO:0007669"/>
    <property type="project" value="UniProtKB-UniRule"/>
</dbReference>
<dbReference type="GO" id="GO:0003924">
    <property type="term" value="F:GTPase activity"/>
    <property type="evidence" value="ECO:0007669"/>
    <property type="project" value="InterPro"/>
</dbReference>
<dbReference type="GO" id="GO:0003746">
    <property type="term" value="F:translation elongation factor activity"/>
    <property type="evidence" value="ECO:0007669"/>
    <property type="project" value="UniProtKB-UniRule"/>
</dbReference>
<dbReference type="CDD" id="cd01883">
    <property type="entry name" value="EF1_alpha"/>
    <property type="match status" value="1"/>
</dbReference>
<dbReference type="CDD" id="cd03693">
    <property type="entry name" value="EF1_alpha_II"/>
    <property type="match status" value="1"/>
</dbReference>
<dbReference type="CDD" id="cd03705">
    <property type="entry name" value="EF1_alpha_III"/>
    <property type="match status" value="1"/>
</dbReference>
<dbReference type="FunFam" id="2.40.30.10:FF:000003">
    <property type="entry name" value="Elongation factor 1-alpha"/>
    <property type="match status" value="1"/>
</dbReference>
<dbReference type="FunFam" id="2.40.30.10:FF:000005">
    <property type="entry name" value="Elongation factor 1-alpha"/>
    <property type="match status" value="1"/>
</dbReference>
<dbReference type="FunFam" id="3.40.50.300:FF:000255">
    <property type="entry name" value="Elongation factor 1-alpha"/>
    <property type="match status" value="1"/>
</dbReference>
<dbReference type="Gene3D" id="3.40.50.300">
    <property type="entry name" value="P-loop containing nucleotide triphosphate hydrolases"/>
    <property type="match status" value="1"/>
</dbReference>
<dbReference type="Gene3D" id="2.40.30.10">
    <property type="entry name" value="Translation factors"/>
    <property type="match status" value="2"/>
</dbReference>
<dbReference type="HAMAP" id="MF_00118_A">
    <property type="entry name" value="EF_Tu_A"/>
    <property type="match status" value="1"/>
</dbReference>
<dbReference type="InterPro" id="IPR004161">
    <property type="entry name" value="EFTu-like_2"/>
</dbReference>
<dbReference type="InterPro" id="IPR031157">
    <property type="entry name" value="G_TR_CS"/>
</dbReference>
<dbReference type="InterPro" id="IPR054696">
    <property type="entry name" value="GTP-eEF1A_C"/>
</dbReference>
<dbReference type="InterPro" id="IPR027417">
    <property type="entry name" value="P-loop_NTPase"/>
</dbReference>
<dbReference type="InterPro" id="IPR005225">
    <property type="entry name" value="Small_GTP-bd"/>
</dbReference>
<dbReference type="InterPro" id="IPR000795">
    <property type="entry name" value="T_Tr_GTP-bd_dom"/>
</dbReference>
<dbReference type="InterPro" id="IPR050100">
    <property type="entry name" value="TRAFAC_GTPase_members"/>
</dbReference>
<dbReference type="InterPro" id="IPR009000">
    <property type="entry name" value="Transl_B-barrel_sf"/>
</dbReference>
<dbReference type="InterPro" id="IPR009001">
    <property type="entry name" value="Transl_elong_EF1A/Init_IF2_C"/>
</dbReference>
<dbReference type="InterPro" id="IPR004539">
    <property type="entry name" value="Transl_elong_EF1A_euk/arc"/>
</dbReference>
<dbReference type="NCBIfam" id="TIGR00483">
    <property type="entry name" value="EF-1_alpha"/>
    <property type="match status" value="1"/>
</dbReference>
<dbReference type="NCBIfam" id="NF008969">
    <property type="entry name" value="PRK12317.1"/>
    <property type="match status" value="1"/>
</dbReference>
<dbReference type="NCBIfam" id="TIGR00231">
    <property type="entry name" value="small_GTP"/>
    <property type="match status" value="1"/>
</dbReference>
<dbReference type="PANTHER" id="PTHR23115">
    <property type="entry name" value="TRANSLATION FACTOR"/>
    <property type="match status" value="1"/>
</dbReference>
<dbReference type="Pfam" id="PF22594">
    <property type="entry name" value="GTP-eEF1A_C"/>
    <property type="match status" value="1"/>
</dbReference>
<dbReference type="Pfam" id="PF00009">
    <property type="entry name" value="GTP_EFTU"/>
    <property type="match status" value="1"/>
</dbReference>
<dbReference type="Pfam" id="PF03144">
    <property type="entry name" value="GTP_EFTU_D2"/>
    <property type="match status" value="1"/>
</dbReference>
<dbReference type="PRINTS" id="PR00315">
    <property type="entry name" value="ELONGATNFCT"/>
</dbReference>
<dbReference type="SUPFAM" id="SSF50465">
    <property type="entry name" value="EF-Tu/eEF-1alpha/eIF2-gamma C-terminal domain"/>
    <property type="match status" value="1"/>
</dbReference>
<dbReference type="SUPFAM" id="SSF52540">
    <property type="entry name" value="P-loop containing nucleoside triphosphate hydrolases"/>
    <property type="match status" value="1"/>
</dbReference>
<dbReference type="SUPFAM" id="SSF50447">
    <property type="entry name" value="Translation proteins"/>
    <property type="match status" value="1"/>
</dbReference>
<dbReference type="PROSITE" id="PS00301">
    <property type="entry name" value="G_TR_1"/>
    <property type="match status" value="1"/>
</dbReference>
<dbReference type="PROSITE" id="PS51722">
    <property type="entry name" value="G_TR_2"/>
    <property type="match status" value="1"/>
</dbReference>
<gene>
    <name evidence="2" type="primary">tuf</name>
    <name type="ordered locus">Hbut_1581</name>
</gene>